<gene>
    <name evidence="1" type="primary">rplW</name>
    <name type="ordered locus">cauri_0391</name>
</gene>
<protein>
    <recommendedName>
        <fullName evidence="1">Large ribosomal subunit protein uL23</fullName>
    </recommendedName>
    <alternativeName>
        <fullName evidence="2">50S ribosomal protein L23</fullName>
    </alternativeName>
</protein>
<proteinExistence type="inferred from homology"/>
<comment type="function">
    <text evidence="1">One of the early assembly proteins it binds 23S rRNA. One of the proteins that surrounds the polypeptide exit tunnel on the outside of the ribosome. Forms the main docking site for trigger factor binding to the ribosome.</text>
</comment>
<comment type="subunit">
    <text evidence="1">Part of the 50S ribosomal subunit. Contacts protein L29, and trigger factor when it is bound to the ribosome.</text>
</comment>
<comment type="similarity">
    <text evidence="1">Belongs to the universal ribosomal protein uL23 family.</text>
</comment>
<sequence length="100" mass="11007">MAKLANPRDVIIAPVVSEKSYGLMEQNVYTFYVSTDSNKTQIKDAVEQIFGVKVASVNTVNRAGKRKRTRTGYGQRKSTKRAYVTLREGSDSIDVFGAGA</sequence>
<dbReference type="EMBL" id="CP001601">
    <property type="protein sequence ID" value="ACP31990.1"/>
    <property type="molecule type" value="Genomic_DNA"/>
</dbReference>
<dbReference type="RefSeq" id="WP_010189649.1">
    <property type="nucleotide sequence ID" value="NZ_ACLH01000066.1"/>
</dbReference>
<dbReference type="SMR" id="C3PKQ4"/>
<dbReference type="STRING" id="548476.cauri_0391"/>
<dbReference type="GeneID" id="31923010"/>
<dbReference type="KEGG" id="car:cauri_0391"/>
<dbReference type="eggNOG" id="COG0089">
    <property type="taxonomic scope" value="Bacteria"/>
</dbReference>
<dbReference type="HOGENOM" id="CLU_037562_3_2_11"/>
<dbReference type="OrthoDB" id="9793353at2"/>
<dbReference type="Proteomes" id="UP000002077">
    <property type="component" value="Chromosome"/>
</dbReference>
<dbReference type="GO" id="GO:1990904">
    <property type="term" value="C:ribonucleoprotein complex"/>
    <property type="evidence" value="ECO:0007669"/>
    <property type="project" value="UniProtKB-KW"/>
</dbReference>
<dbReference type="GO" id="GO:0005840">
    <property type="term" value="C:ribosome"/>
    <property type="evidence" value="ECO:0007669"/>
    <property type="project" value="UniProtKB-KW"/>
</dbReference>
<dbReference type="GO" id="GO:0019843">
    <property type="term" value="F:rRNA binding"/>
    <property type="evidence" value="ECO:0007669"/>
    <property type="project" value="UniProtKB-UniRule"/>
</dbReference>
<dbReference type="GO" id="GO:0003735">
    <property type="term" value="F:structural constituent of ribosome"/>
    <property type="evidence" value="ECO:0007669"/>
    <property type="project" value="InterPro"/>
</dbReference>
<dbReference type="GO" id="GO:0006412">
    <property type="term" value="P:translation"/>
    <property type="evidence" value="ECO:0007669"/>
    <property type="project" value="UniProtKB-UniRule"/>
</dbReference>
<dbReference type="FunFam" id="3.30.70.330:FF:000001">
    <property type="entry name" value="50S ribosomal protein L23"/>
    <property type="match status" value="1"/>
</dbReference>
<dbReference type="Gene3D" id="3.30.70.330">
    <property type="match status" value="1"/>
</dbReference>
<dbReference type="HAMAP" id="MF_01369_B">
    <property type="entry name" value="Ribosomal_uL23_B"/>
    <property type="match status" value="1"/>
</dbReference>
<dbReference type="InterPro" id="IPR012677">
    <property type="entry name" value="Nucleotide-bd_a/b_plait_sf"/>
</dbReference>
<dbReference type="InterPro" id="IPR013025">
    <property type="entry name" value="Ribosomal_uL23-like"/>
</dbReference>
<dbReference type="InterPro" id="IPR012678">
    <property type="entry name" value="Ribosomal_uL23/eL15/eS24_sf"/>
</dbReference>
<dbReference type="NCBIfam" id="NF004359">
    <property type="entry name" value="PRK05738.1-3"/>
    <property type="match status" value="1"/>
</dbReference>
<dbReference type="NCBIfam" id="NF004363">
    <property type="entry name" value="PRK05738.2-4"/>
    <property type="match status" value="1"/>
</dbReference>
<dbReference type="NCBIfam" id="NF004364">
    <property type="entry name" value="PRK05738.2-5"/>
    <property type="match status" value="1"/>
</dbReference>
<dbReference type="PANTHER" id="PTHR11620">
    <property type="entry name" value="60S RIBOSOMAL PROTEIN L23A"/>
    <property type="match status" value="1"/>
</dbReference>
<dbReference type="Pfam" id="PF00276">
    <property type="entry name" value="Ribosomal_L23"/>
    <property type="match status" value="1"/>
</dbReference>
<dbReference type="SUPFAM" id="SSF54189">
    <property type="entry name" value="Ribosomal proteins S24e, L23 and L15e"/>
    <property type="match status" value="1"/>
</dbReference>
<evidence type="ECO:0000255" key="1">
    <source>
        <dbReference type="HAMAP-Rule" id="MF_01369"/>
    </source>
</evidence>
<evidence type="ECO:0000305" key="2"/>
<keyword id="KW-1185">Reference proteome</keyword>
<keyword id="KW-0687">Ribonucleoprotein</keyword>
<keyword id="KW-0689">Ribosomal protein</keyword>
<keyword id="KW-0694">RNA-binding</keyword>
<keyword id="KW-0699">rRNA-binding</keyword>
<feature type="chain" id="PRO_1000184081" description="Large ribosomal subunit protein uL23">
    <location>
        <begin position="1"/>
        <end position="100"/>
    </location>
</feature>
<accession>C3PKQ4</accession>
<organism>
    <name type="scientific">Corynebacterium aurimucosum (strain ATCC 700975 / DSM 44827 / CIP 107346 / CN-1)</name>
    <name type="common">Corynebacterium nigricans</name>
    <dbReference type="NCBI Taxonomy" id="548476"/>
    <lineage>
        <taxon>Bacteria</taxon>
        <taxon>Bacillati</taxon>
        <taxon>Actinomycetota</taxon>
        <taxon>Actinomycetes</taxon>
        <taxon>Mycobacteriales</taxon>
        <taxon>Corynebacteriaceae</taxon>
        <taxon>Corynebacterium</taxon>
    </lineage>
</organism>
<name>RL23_CORA7</name>
<reference key="1">
    <citation type="journal article" date="2010" name="BMC Genomics">
        <title>Complete genome sequence and lifestyle of black-pigmented Corynebacterium aurimucosum ATCC 700975 (formerly C. nigricans CN-1) isolated from a vaginal swab of a woman with spontaneous abortion.</title>
        <authorList>
            <person name="Trost E."/>
            <person name="Gotker S."/>
            <person name="Schneider J."/>
            <person name="Schneiker-Bekel S."/>
            <person name="Szczepanowski R."/>
            <person name="Tilker A."/>
            <person name="Viehoever P."/>
            <person name="Arnold W."/>
            <person name="Bekel T."/>
            <person name="Blom J."/>
            <person name="Gartemann K.H."/>
            <person name="Linke B."/>
            <person name="Goesmann A."/>
            <person name="Puhler A."/>
            <person name="Shukla S.K."/>
            <person name="Tauch A."/>
        </authorList>
    </citation>
    <scope>NUCLEOTIDE SEQUENCE [LARGE SCALE GENOMIC DNA]</scope>
    <source>
        <strain>ATCC 700975 / DSM 44827 / CIP 107346 / CN-1</strain>
    </source>
</reference>